<accession>A9V767</accession>
<evidence type="ECO:0000255" key="1">
    <source>
        <dbReference type="HAMAP-Rule" id="MF_03115"/>
    </source>
</evidence>
<protein>
    <recommendedName>
        <fullName evidence="1">Anamorsin homolog</fullName>
    </recommendedName>
    <alternativeName>
        <fullName evidence="1">Fe-S cluster assembly protein DRE2 homolog</fullName>
    </alternativeName>
</protein>
<reference key="1">
    <citation type="journal article" date="2008" name="Nature">
        <title>The genome of the choanoflagellate Monosiga brevicollis and the origin of metazoans.</title>
        <authorList>
            <consortium name="JGI Sequencing"/>
            <person name="King N."/>
            <person name="Westbrook M.J."/>
            <person name="Young S.L."/>
            <person name="Kuo A."/>
            <person name="Abedin M."/>
            <person name="Chapman J."/>
            <person name="Fairclough S."/>
            <person name="Hellsten U."/>
            <person name="Isogai Y."/>
            <person name="Letunic I."/>
            <person name="Marr M."/>
            <person name="Pincus D."/>
            <person name="Putnam N."/>
            <person name="Rokas A."/>
            <person name="Wright K.J."/>
            <person name="Zuzow R."/>
            <person name="Dirks W."/>
            <person name="Good M."/>
            <person name="Goodstein D."/>
            <person name="Lemons D."/>
            <person name="Li W."/>
            <person name="Lyons J.B."/>
            <person name="Morris A."/>
            <person name="Nichols S."/>
            <person name="Richter D.J."/>
            <person name="Salamov A."/>
            <person name="Bork P."/>
            <person name="Lim W.A."/>
            <person name="Manning G."/>
            <person name="Miller W.T."/>
            <person name="McGinnis W."/>
            <person name="Shapiro H."/>
            <person name="Tjian R."/>
            <person name="Grigoriev I.V."/>
            <person name="Rokhsar D."/>
        </authorList>
    </citation>
    <scope>NUCLEOTIDE SEQUENCE [LARGE SCALE GENOMIC DNA]</scope>
    <source>
        <strain>MX1 / ATCC 50154</strain>
    </source>
</reference>
<feature type="chain" id="PRO_0000392412" description="Anamorsin homolog">
    <location>
        <begin position="1"/>
        <end position="282"/>
    </location>
</feature>
<feature type="region of interest" description="N-terminal SAM-like domain" evidence="1">
    <location>
        <begin position="1"/>
        <end position="140"/>
    </location>
</feature>
<feature type="region of interest" description="Linker" evidence="1">
    <location>
        <begin position="141"/>
        <end position="192"/>
    </location>
</feature>
<feature type="region of interest" description="Fe-S binding site A" evidence="1">
    <location>
        <begin position="203"/>
        <end position="219"/>
    </location>
</feature>
<feature type="region of interest" description="Fe-S binding site B" evidence="1">
    <location>
        <begin position="243"/>
        <end position="257"/>
    </location>
</feature>
<feature type="short sequence motif" description="Cx2C motif 1" evidence="1">
    <location>
        <begin position="243"/>
        <end position="246"/>
    </location>
</feature>
<feature type="short sequence motif" description="Cx2C motif 2" evidence="1">
    <location>
        <begin position="254"/>
        <end position="257"/>
    </location>
</feature>
<feature type="binding site" evidence="1">
    <location>
        <position position="203"/>
    </location>
    <ligand>
        <name>[2Fe-2S] cluster</name>
        <dbReference type="ChEBI" id="CHEBI:190135"/>
    </ligand>
</feature>
<feature type="binding site" evidence="1">
    <location>
        <position position="214"/>
    </location>
    <ligand>
        <name>[2Fe-2S] cluster</name>
        <dbReference type="ChEBI" id="CHEBI:190135"/>
    </ligand>
</feature>
<feature type="binding site" evidence="1">
    <location>
        <position position="217"/>
    </location>
    <ligand>
        <name>[2Fe-2S] cluster</name>
        <dbReference type="ChEBI" id="CHEBI:190135"/>
    </ligand>
</feature>
<feature type="binding site" evidence="1">
    <location>
        <position position="219"/>
    </location>
    <ligand>
        <name>[2Fe-2S] cluster</name>
        <dbReference type="ChEBI" id="CHEBI:190135"/>
    </ligand>
</feature>
<feature type="binding site" evidence="1">
    <location>
        <position position="243"/>
    </location>
    <ligand>
        <name>[4Fe-4S] cluster</name>
        <dbReference type="ChEBI" id="CHEBI:49883"/>
    </ligand>
</feature>
<feature type="binding site" evidence="1">
    <location>
        <position position="246"/>
    </location>
    <ligand>
        <name>[4Fe-4S] cluster</name>
        <dbReference type="ChEBI" id="CHEBI:49883"/>
    </ligand>
</feature>
<feature type="binding site" evidence="1">
    <location>
        <position position="254"/>
    </location>
    <ligand>
        <name>[4Fe-4S] cluster</name>
        <dbReference type="ChEBI" id="CHEBI:49883"/>
    </ligand>
</feature>
<feature type="binding site" evidence="1">
    <location>
        <position position="257"/>
    </location>
    <ligand>
        <name>[4Fe-4S] cluster</name>
        <dbReference type="ChEBI" id="CHEBI:49883"/>
    </ligand>
</feature>
<proteinExistence type="inferred from homology"/>
<dbReference type="EMBL" id="CH991564">
    <property type="protein sequence ID" value="EDQ86667.1"/>
    <property type="molecule type" value="Genomic_DNA"/>
</dbReference>
<dbReference type="RefSeq" id="XP_001748503.1">
    <property type="nucleotide sequence ID" value="XM_001748451.1"/>
</dbReference>
<dbReference type="SMR" id="A9V767"/>
<dbReference type="FunCoup" id="A9V767">
    <property type="interactions" value="1771"/>
</dbReference>
<dbReference type="STRING" id="81824.A9V767"/>
<dbReference type="EnsemblProtists" id="EDQ86667">
    <property type="protein sequence ID" value="EDQ86667"/>
    <property type="gene ID" value="MONBRDRAFT_33738"/>
</dbReference>
<dbReference type="KEGG" id="mbr:MONBRDRAFT_33738"/>
<dbReference type="eggNOG" id="KOG4020">
    <property type="taxonomic scope" value="Eukaryota"/>
</dbReference>
<dbReference type="InParanoid" id="A9V767"/>
<dbReference type="OMA" id="GFINCRE"/>
<dbReference type="Proteomes" id="UP000001357">
    <property type="component" value="Unassembled WGS sequence"/>
</dbReference>
<dbReference type="GO" id="GO:0005737">
    <property type="term" value="C:cytoplasm"/>
    <property type="evidence" value="ECO:0000318"/>
    <property type="project" value="GO_Central"/>
</dbReference>
<dbReference type="GO" id="GO:0005758">
    <property type="term" value="C:mitochondrial intermembrane space"/>
    <property type="evidence" value="ECO:0007669"/>
    <property type="project" value="UniProtKB-SubCell"/>
</dbReference>
<dbReference type="GO" id="GO:0051537">
    <property type="term" value="F:2 iron, 2 sulfur cluster binding"/>
    <property type="evidence" value="ECO:0007669"/>
    <property type="project" value="UniProtKB-UniRule"/>
</dbReference>
<dbReference type="GO" id="GO:0051539">
    <property type="term" value="F:4 iron, 4 sulfur cluster binding"/>
    <property type="evidence" value="ECO:0007669"/>
    <property type="project" value="UniProtKB-KW"/>
</dbReference>
<dbReference type="GO" id="GO:0009055">
    <property type="term" value="F:electron transfer activity"/>
    <property type="evidence" value="ECO:0007669"/>
    <property type="project" value="UniProtKB-UniRule"/>
</dbReference>
<dbReference type="GO" id="GO:0046872">
    <property type="term" value="F:metal ion binding"/>
    <property type="evidence" value="ECO:0007669"/>
    <property type="project" value="UniProtKB-KW"/>
</dbReference>
<dbReference type="GO" id="GO:0016226">
    <property type="term" value="P:iron-sulfur cluster assembly"/>
    <property type="evidence" value="ECO:0000318"/>
    <property type="project" value="GO_Central"/>
</dbReference>
<dbReference type="FunFam" id="3.40.50.150:FF:000902">
    <property type="match status" value="1"/>
</dbReference>
<dbReference type="Gene3D" id="3.40.50.150">
    <property type="entry name" value="Vaccinia Virus protein VP39"/>
    <property type="match status" value="1"/>
</dbReference>
<dbReference type="HAMAP" id="MF_03115">
    <property type="entry name" value="Anamorsin"/>
    <property type="match status" value="1"/>
</dbReference>
<dbReference type="InterPro" id="IPR007785">
    <property type="entry name" value="Anamorsin"/>
</dbReference>
<dbReference type="InterPro" id="IPR049011">
    <property type="entry name" value="Anamorsin_N_metazoan"/>
</dbReference>
<dbReference type="InterPro" id="IPR046408">
    <property type="entry name" value="CIAPIN1"/>
</dbReference>
<dbReference type="InterPro" id="IPR029063">
    <property type="entry name" value="SAM-dependent_MTases_sf"/>
</dbReference>
<dbReference type="PANTHER" id="PTHR13273">
    <property type="entry name" value="ANAMORSIN"/>
    <property type="match status" value="1"/>
</dbReference>
<dbReference type="PANTHER" id="PTHR13273:SF14">
    <property type="entry name" value="ANAMORSIN"/>
    <property type="match status" value="1"/>
</dbReference>
<dbReference type="Pfam" id="PF20922">
    <property type="entry name" value="Anamorsin_N"/>
    <property type="match status" value="1"/>
</dbReference>
<dbReference type="Pfam" id="PF05093">
    <property type="entry name" value="CIAPIN1"/>
    <property type="match status" value="1"/>
</dbReference>
<dbReference type="SUPFAM" id="SSF53335">
    <property type="entry name" value="S-adenosyl-L-methionine-dependent methyltransferases"/>
    <property type="match status" value="1"/>
</dbReference>
<keyword id="KW-0001">2Fe-2S</keyword>
<keyword id="KW-0004">4Fe-4S</keyword>
<keyword id="KW-0963">Cytoplasm</keyword>
<keyword id="KW-0408">Iron</keyword>
<keyword id="KW-0411">Iron-sulfur</keyword>
<keyword id="KW-0479">Metal-binding</keyword>
<keyword id="KW-0496">Mitochondrion</keyword>
<keyword id="KW-1185">Reference proteome</keyword>
<gene>
    <name type="ORF">33738</name>
</gene>
<sequence>MADLQGKAVLTIAVPEAKADQIEAEILRLRAATTEAGSVQLEQFDRLEQVFLAPSSYDVIFSGHIALPAKSHADSALAKLAAALKPGGRLALRESLNSRNETALRSALTMGGFVNVQVSTSEHALEAHADKPVYEVGAAAPLKLSFAKKKQSGAAAPAAQVAEVWTIATDDFDDDDLLENDGDELLDAEDLALATTAPEGDDCEVGAGGKRRACKNCTCGRADAEAEQAAKPTLTGPLPASSCGNCYLGDAFRCASCPYLGMPAFKPGEKVTLSDRQLKADA</sequence>
<organism>
    <name type="scientific">Monosiga brevicollis</name>
    <name type="common">Choanoflagellate</name>
    <dbReference type="NCBI Taxonomy" id="81824"/>
    <lineage>
        <taxon>Eukaryota</taxon>
        <taxon>Choanoflagellata</taxon>
        <taxon>Craspedida</taxon>
        <taxon>Salpingoecidae</taxon>
        <taxon>Monosiga</taxon>
    </lineage>
</organism>
<name>DRE2_MONBE</name>
<comment type="function">
    <text evidence="1">Component of the cytosolic iron-sulfur (Fe-S) protein assembly (CIA) machinery. Required for the maturation of extramitochondrial Fe-S proteins. Part of an electron transfer chain functioning in an early step of cytosolic Fe-S biogenesis, facilitating the de novo assembly of a [4Fe-4S] cluster on the cytosolic Fe-S scaffold complex. Electrons are transferred from NADPH via a FAD- and FMN-containing diflavin oxidoreductase. Together with the diflavin oxidoreductase, also required for the assembly of the diferric tyrosyl radical cofactor of ribonucleotide reductase (RNR), probably by providing electrons for reduction during radical cofactor maturation in the catalytic small subunit.</text>
</comment>
<comment type="cofactor">
    <cofactor evidence="1">
        <name>[2Fe-2S] cluster</name>
        <dbReference type="ChEBI" id="CHEBI:190135"/>
    </cofactor>
</comment>
<comment type="cofactor">
    <cofactor evidence="1">
        <name>[4Fe-4S] cluster</name>
        <dbReference type="ChEBI" id="CHEBI:49883"/>
    </cofactor>
</comment>
<comment type="subunit">
    <text evidence="1">Monomer.</text>
</comment>
<comment type="subcellular location">
    <subcellularLocation>
        <location evidence="1">Cytoplasm</location>
    </subcellularLocation>
    <subcellularLocation>
        <location evidence="1">Mitochondrion intermembrane space</location>
    </subcellularLocation>
</comment>
<comment type="domain">
    <text evidence="1">The C-terminal domain binds 2 Fe-S clusters but is otherwise mostly in an intrinsically disordered conformation.</text>
</comment>
<comment type="domain">
    <text evidence="1">The N-terminal domain has structural similarity with S-adenosyl-L-methionine-dependent methyltransferases, but does not bind S-adenosyl-L-methionine. It is required for correct assembly of the 2 Fe-S clusters.</text>
</comment>
<comment type="domain">
    <text evidence="1">The twin Cx2C motifs are involved in the recognition by the mitochondrial MIA40-ERV1 disulfide relay system. The formation of 2 disulfide bonds in the Cx2C motifs through dithiol/disulfide exchange reactions effectively traps the protein in the mitochondrial intermembrane space.</text>
</comment>
<comment type="similarity">
    <text evidence="1">Belongs to the anamorsin family.</text>
</comment>